<dbReference type="EMBL" id="AJ223299">
    <property type="protein sequence ID" value="CAA11240.1"/>
    <property type="molecule type" value="Genomic_DNA"/>
</dbReference>
<dbReference type="EMBL" id="AB018077">
    <property type="protein sequence ID" value="BAA33496.1"/>
    <property type="molecule type" value="mRNA"/>
</dbReference>
<dbReference type="EMBL" id="CU329671">
    <property type="protein sequence ID" value="CAA22442.1"/>
    <property type="molecule type" value="Genomic_DNA"/>
</dbReference>
<dbReference type="EMBL" id="M85298">
    <property type="protein sequence ID" value="AAB04034.1"/>
    <property type="molecule type" value="Genomic_DNA"/>
</dbReference>
<dbReference type="PIR" id="T43428">
    <property type="entry name" value="T43428"/>
</dbReference>
<dbReference type="RefSeq" id="NP_596059.1">
    <property type="nucleotide sequence ID" value="NM_001021970.2"/>
</dbReference>
<dbReference type="SMR" id="P36626"/>
<dbReference type="BioGRID" id="276986">
    <property type="interactions" value="23"/>
</dbReference>
<dbReference type="FunCoup" id="P36626">
    <property type="interactions" value="77"/>
</dbReference>
<dbReference type="IntAct" id="P36626">
    <property type="interactions" value="1"/>
</dbReference>
<dbReference type="STRING" id="284812.P36626"/>
<dbReference type="iPTMnet" id="P36626"/>
<dbReference type="PaxDb" id="4896-SPBC29A10.14.1"/>
<dbReference type="EnsemblFungi" id="SPBC29A10.14.1">
    <property type="protein sequence ID" value="SPBC29A10.14.1:pep"/>
    <property type="gene ID" value="SPBC29A10.14"/>
</dbReference>
<dbReference type="GeneID" id="2540458"/>
<dbReference type="KEGG" id="spo:2540458"/>
<dbReference type="PomBase" id="SPBC29A10.14">
    <property type="gene designation" value="rec8"/>
</dbReference>
<dbReference type="VEuPathDB" id="FungiDB:SPBC29A10.14"/>
<dbReference type="eggNOG" id="KOG1213">
    <property type="taxonomic scope" value="Eukaryota"/>
</dbReference>
<dbReference type="HOGENOM" id="CLU_438030_0_0_1"/>
<dbReference type="InParanoid" id="P36626"/>
<dbReference type="OMA" id="ECANFYE"/>
<dbReference type="PhylomeDB" id="P36626"/>
<dbReference type="Reactome" id="R-SPO-2470946">
    <property type="pathway name" value="Cohesin Loading onto Chromatin"/>
</dbReference>
<dbReference type="Reactome" id="R-SPO-2500257">
    <property type="pathway name" value="Resolution of Sister Chromatid Cohesion"/>
</dbReference>
<dbReference type="Reactome" id="R-SPO-3108214">
    <property type="pathway name" value="SUMOylation of DNA damage response and repair proteins"/>
</dbReference>
<dbReference type="PRO" id="PR:P36626"/>
<dbReference type="Proteomes" id="UP000002485">
    <property type="component" value="Chromosome II"/>
</dbReference>
<dbReference type="GO" id="GO:0000785">
    <property type="term" value="C:chromatin"/>
    <property type="evidence" value="ECO:0000314"/>
    <property type="project" value="PomBase"/>
</dbReference>
<dbReference type="GO" id="GO:0008278">
    <property type="term" value="C:cohesin complex"/>
    <property type="evidence" value="ECO:0000318"/>
    <property type="project" value="GO_Central"/>
</dbReference>
<dbReference type="GO" id="GO:0000779">
    <property type="term" value="C:condensed chromosome, centromeric region"/>
    <property type="evidence" value="ECO:0000314"/>
    <property type="project" value="PomBase"/>
</dbReference>
<dbReference type="GO" id="GO:0030893">
    <property type="term" value="C:meiotic cohesin complex"/>
    <property type="evidence" value="ECO:0000314"/>
    <property type="project" value="PomBase"/>
</dbReference>
<dbReference type="GO" id="GO:0072687">
    <property type="term" value="C:meiotic spindle"/>
    <property type="evidence" value="ECO:0000314"/>
    <property type="project" value="PomBase"/>
</dbReference>
<dbReference type="GO" id="GO:0005634">
    <property type="term" value="C:nucleus"/>
    <property type="evidence" value="ECO:0000314"/>
    <property type="project" value="PomBase"/>
</dbReference>
<dbReference type="GO" id="GO:0005721">
    <property type="term" value="C:pericentric heterochromatin"/>
    <property type="evidence" value="ECO:0000314"/>
    <property type="project" value="PomBase"/>
</dbReference>
<dbReference type="GO" id="GO:0061776">
    <property type="term" value="F:ATP-dependent topological DNA co-entrapment activity"/>
    <property type="evidence" value="ECO:0000269"/>
    <property type="project" value="PomBase"/>
</dbReference>
<dbReference type="GO" id="GO:0003682">
    <property type="term" value="F:chromatin binding"/>
    <property type="evidence" value="ECO:0000318"/>
    <property type="project" value="GO_Central"/>
</dbReference>
<dbReference type="GO" id="GO:0140588">
    <property type="term" value="P:chromatin looping"/>
    <property type="evidence" value="ECO:0000315"/>
    <property type="project" value="PomBase"/>
</dbReference>
<dbReference type="GO" id="GO:0031619">
    <property type="term" value="P:homologous chromosome orientation in meiotic metaphase I"/>
    <property type="evidence" value="ECO:0000316"/>
    <property type="project" value="PomBase"/>
</dbReference>
<dbReference type="GO" id="GO:0007129">
    <property type="term" value="P:homologous chromosome pairing at meiosis"/>
    <property type="evidence" value="ECO:0000315"/>
    <property type="project" value="PomBase"/>
</dbReference>
<dbReference type="GO" id="GO:1990813">
    <property type="term" value="P:meiotic centromeric cohesion protection in anaphase I"/>
    <property type="evidence" value="ECO:0000315"/>
    <property type="project" value="PomBase"/>
</dbReference>
<dbReference type="GO" id="GO:0010789">
    <property type="term" value="P:meiotic sister chromatid cohesion involved in meiosis I"/>
    <property type="evidence" value="ECO:0000315"/>
    <property type="project" value="PomBase"/>
</dbReference>
<dbReference type="GO" id="GO:0007062">
    <property type="term" value="P:sister chromatid cohesion"/>
    <property type="evidence" value="ECO:0000318"/>
    <property type="project" value="GO_Central"/>
</dbReference>
<dbReference type="GO" id="GO:0051455">
    <property type="term" value="P:spindle attachment to meiosis I kinetochore"/>
    <property type="evidence" value="ECO:0000315"/>
    <property type="project" value="PomBase"/>
</dbReference>
<dbReference type="CDD" id="cd21789">
    <property type="entry name" value="Rad21_Rec8_M_SpRec8p-like"/>
    <property type="match status" value="1"/>
</dbReference>
<dbReference type="Gene3D" id="1.10.10.580">
    <property type="entry name" value="Structural maintenance of chromosome 1. Chain E"/>
    <property type="match status" value="1"/>
</dbReference>
<dbReference type="InterPro" id="IPR039781">
    <property type="entry name" value="Rad21/Rec8-like"/>
</dbReference>
<dbReference type="InterPro" id="IPR006909">
    <property type="entry name" value="Rad21/Rec8_C_eu"/>
</dbReference>
<dbReference type="InterPro" id="IPR006910">
    <property type="entry name" value="Rad21_Rec8_N"/>
</dbReference>
<dbReference type="InterPro" id="IPR023093">
    <property type="entry name" value="ScpA-like_C"/>
</dbReference>
<dbReference type="InterPro" id="IPR036390">
    <property type="entry name" value="WH_DNA-bd_sf"/>
</dbReference>
<dbReference type="PANTHER" id="PTHR12585:SF72">
    <property type="entry name" value="MEIOTIC RECOMBINATION PROTEIN REC8"/>
    <property type="match status" value="1"/>
</dbReference>
<dbReference type="PANTHER" id="PTHR12585">
    <property type="entry name" value="SCC1 / RAD21 FAMILY MEMBER"/>
    <property type="match status" value="1"/>
</dbReference>
<dbReference type="Pfam" id="PF04824">
    <property type="entry name" value="Rad21_Rec8"/>
    <property type="match status" value="1"/>
</dbReference>
<dbReference type="Pfam" id="PF04825">
    <property type="entry name" value="Rad21_Rec8_N"/>
    <property type="match status" value="1"/>
</dbReference>
<dbReference type="SUPFAM" id="SSF46785">
    <property type="entry name" value="Winged helix' DNA-binding domain"/>
    <property type="match status" value="1"/>
</dbReference>
<accession>P36626</accession>
<accession>O60051</accession>
<reference key="1">
    <citation type="journal article" date="1999" name="Mol. Cell. Biol.">
        <title>Rec8p, a meiotic recombination and sister chromatid cohesion phosphoprotein of the Rad21p family conserved from fission yeast to humans.</title>
        <authorList>
            <person name="Parisi S."/>
            <person name="McKay M.J."/>
            <person name="Molnar M."/>
            <person name="Thompson M.A."/>
            <person name="van der Spek P.J."/>
            <person name="van Drunen-Schoenmaker E."/>
            <person name="Kanaar R."/>
            <person name="Lehmann E."/>
            <person name="Hoeijmakers J.H.J."/>
            <person name="Kohli J."/>
        </authorList>
    </citation>
    <scope>NUCLEOTIDE SEQUENCE [GENOMIC DNA]</scope>
    <scope>SUBCELLULAR LOCATION</scope>
    <scope>PHOSPHORYLATION</scope>
</reference>
<reference key="2">
    <citation type="journal article" date="1999" name="Nature">
        <title>Cohesin Rec8 is required for reductional chromosome segregation at meiosis.</title>
        <authorList>
            <person name="Watanabe Y."/>
            <person name="Nurse P."/>
        </authorList>
    </citation>
    <scope>NUCLEOTIDE SEQUENCE [MRNA]</scope>
    <scope>FUNCTION</scope>
    <scope>PHOSPHORYLATION</scope>
</reference>
<reference key="3">
    <citation type="journal article" date="2002" name="Nature">
        <title>The genome sequence of Schizosaccharomyces pombe.</title>
        <authorList>
            <person name="Wood V."/>
            <person name="Gwilliam R."/>
            <person name="Rajandream M.A."/>
            <person name="Lyne M.H."/>
            <person name="Lyne R."/>
            <person name="Stewart A."/>
            <person name="Sgouros J.G."/>
            <person name="Peat N."/>
            <person name="Hayles J."/>
            <person name="Baker S.G."/>
            <person name="Basham D."/>
            <person name="Bowman S."/>
            <person name="Brooks K."/>
            <person name="Brown D."/>
            <person name="Brown S."/>
            <person name="Chillingworth T."/>
            <person name="Churcher C.M."/>
            <person name="Collins M."/>
            <person name="Connor R."/>
            <person name="Cronin A."/>
            <person name="Davis P."/>
            <person name="Feltwell T."/>
            <person name="Fraser A."/>
            <person name="Gentles S."/>
            <person name="Goble A."/>
            <person name="Hamlin N."/>
            <person name="Harris D.E."/>
            <person name="Hidalgo J."/>
            <person name="Hodgson G."/>
            <person name="Holroyd S."/>
            <person name="Hornsby T."/>
            <person name="Howarth S."/>
            <person name="Huckle E.J."/>
            <person name="Hunt S."/>
            <person name="Jagels K."/>
            <person name="James K.D."/>
            <person name="Jones L."/>
            <person name="Jones M."/>
            <person name="Leather S."/>
            <person name="McDonald S."/>
            <person name="McLean J."/>
            <person name="Mooney P."/>
            <person name="Moule S."/>
            <person name="Mungall K.L."/>
            <person name="Murphy L.D."/>
            <person name="Niblett D."/>
            <person name="Odell C."/>
            <person name="Oliver K."/>
            <person name="O'Neil S."/>
            <person name="Pearson D."/>
            <person name="Quail M.A."/>
            <person name="Rabbinowitsch E."/>
            <person name="Rutherford K.M."/>
            <person name="Rutter S."/>
            <person name="Saunders D."/>
            <person name="Seeger K."/>
            <person name="Sharp S."/>
            <person name="Skelton J."/>
            <person name="Simmonds M.N."/>
            <person name="Squares R."/>
            <person name="Squares S."/>
            <person name="Stevens K."/>
            <person name="Taylor K."/>
            <person name="Taylor R.G."/>
            <person name="Tivey A."/>
            <person name="Walsh S.V."/>
            <person name="Warren T."/>
            <person name="Whitehead S."/>
            <person name="Woodward J.R."/>
            <person name="Volckaert G."/>
            <person name="Aert R."/>
            <person name="Robben J."/>
            <person name="Grymonprez B."/>
            <person name="Weltjens I."/>
            <person name="Vanstreels E."/>
            <person name="Rieger M."/>
            <person name="Schaefer M."/>
            <person name="Mueller-Auer S."/>
            <person name="Gabel C."/>
            <person name="Fuchs M."/>
            <person name="Duesterhoeft A."/>
            <person name="Fritzc C."/>
            <person name="Holzer E."/>
            <person name="Moestl D."/>
            <person name="Hilbert H."/>
            <person name="Borzym K."/>
            <person name="Langer I."/>
            <person name="Beck A."/>
            <person name="Lehrach H."/>
            <person name="Reinhardt R."/>
            <person name="Pohl T.M."/>
            <person name="Eger P."/>
            <person name="Zimmermann W."/>
            <person name="Wedler H."/>
            <person name="Wambutt R."/>
            <person name="Purnelle B."/>
            <person name="Goffeau A."/>
            <person name="Cadieu E."/>
            <person name="Dreano S."/>
            <person name="Gloux S."/>
            <person name="Lelaure V."/>
            <person name="Mottier S."/>
            <person name="Galibert F."/>
            <person name="Aves S.J."/>
            <person name="Xiang Z."/>
            <person name="Hunt C."/>
            <person name="Moore K."/>
            <person name="Hurst S.M."/>
            <person name="Lucas M."/>
            <person name="Rochet M."/>
            <person name="Gaillardin C."/>
            <person name="Tallada V.A."/>
            <person name="Garzon A."/>
            <person name="Thode G."/>
            <person name="Daga R.R."/>
            <person name="Cruzado L."/>
            <person name="Jimenez J."/>
            <person name="Sanchez M."/>
            <person name="del Rey F."/>
            <person name="Benito J."/>
            <person name="Dominguez A."/>
            <person name="Revuelta J.L."/>
            <person name="Moreno S."/>
            <person name="Armstrong J."/>
            <person name="Forsburg S.L."/>
            <person name="Cerutti L."/>
            <person name="Lowe T."/>
            <person name="McCombie W.R."/>
            <person name="Paulsen I."/>
            <person name="Potashkin J."/>
            <person name="Shpakovski G.V."/>
            <person name="Ussery D."/>
            <person name="Barrell B.G."/>
            <person name="Nurse P."/>
        </authorList>
    </citation>
    <scope>NUCLEOTIDE SEQUENCE [LARGE SCALE GENOMIC DNA]</scope>
    <source>
        <strain>972 / ATCC 24843</strain>
    </source>
</reference>
<reference key="4">
    <citation type="journal article" date="1992" name="Genetics">
        <title>Meiotically induced rec7 and rec8 genes of Schizosaccharomyces pombe.</title>
        <authorList>
            <person name="Lin Y."/>
            <person name="Larson K.L."/>
            <person name="Dorer R."/>
            <person name="Smith G.R."/>
        </authorList>
    </citation>
    <scope>NUCLEOTIDE SEQUENCE [GENOMIC DNA] OF 147-561</scope>
</reference>
<reference key="5">
    <citation type="journal article" date="2005" name="Cell">
        <title>The kinetochore protein moa1 enables cohesion-mediated monopolar attachment at meiosis I.</title>
        <authorList>
            <person name="Yokobayashi S."/>
            <person name="Watanabe Y."/>
        </authorList>
    </citation>
    <scope>INTERACTION WITH MOA1</scope>
</reference>
<reference key="6">
    <citation type="journal article" date="2005" name="Curr. Biol.">
        <title>A large-scale screen in S. pombe identifies seven novel genes required for critical meiotic events.</title>
        <authorList>
            <person name="Martin-Castellanos C."/>
            <person name="Blanco M."/>
            <person name="Rozalen A.E."/>
            <person name="Perez-Hidalgo L."/>
            <person name="Garcia A.I."/>
            <person name="Conde F."/>
            <person name="Mata J."/>
            <person name="Ellermeier C."/>
            <person name="Davis L."/>
            <person name="San-Segundo P."/>
            <person name="Smith G.R."/>
            <person name="Moreno S."/>
        </authorList>
    </citation>
    <scope>FUNCTION IN MEIOSIS</scope>
</reference>
<reference key="7">
    <citation type="journal article" date="2006" name="Nat. Biotechnol.">
        <title>ORFeome cloning and global analysis of protein localization in the fission yeast Schizosaccharomyces pombe.</title>
        <authorList>
            <person name="Matsuyama A."/>
            <person name="Arai R."/>
            <person name="Yashiroda Y."/>
            <person name="Shirai A."/>
            <person name="Kamata A."/>
            <person name="Sekido S."/>
            <person name="Kobayashi Y."/>
            <person name="Hashimoto A."/>
            <person name="Hamamoto M."/>
            <person name="Hiraoka Y."/>
            <person name="Horinouchi S."/>
            <person name="Yoshida M."/>
        </authorList>
    </citation>
    <scope>SUBCELLULAR LOCATION [LARGE SCALE ANALYSIS]</scope>
</reference>
<reference key="8">
    <citation type="journal article" date="2019" name="Nucleic Acids Res.">
        <title>Conserved HORMA domain-containing protein Hop1 stabilizes interaction between proteins of meiotic DNA break hotspots and chromosome axis.</title>
        <authorList>
            <person name="Kariyazono R."/>
            <person name="Oda A."/>
            <person name="Yamada T."/>
            <person name="Ohta K."/>
        </authorList>
    </citation>
    <scope>SUBCELLULAR LOCATION</scope>
</reference>
<evidence type="ECO:0000256" key="1">
    <source>
        <dbReference type="SAM" id="MobiDB-lite"/>
    </source>
</evidence>
<evidence type="ECO:0000269" key="2">
    <source>
    </source>
</evidence>
<evidence type="ECO:0000269" key="3">
    <source>
    </source>
</evidence>
<evidence type="ECO:0000269" key="4">
    <source>
    </source>
</evidence>
<evidence type="ECO:0000269" key="5">
    <source>
    </source>
</evidence>
<evidence type="ECO:0000269" key="6">
    <source>
    </source>
</evidence>
<evidence type="ECO:0000269" key="7">
    <source>
    </source>
</evidence>
<evidence type="ECO:0000305" key="8"/>
<proteinExistence type="evidence at protein level"/>
<name>REC8_SCHPO</name>
<protein>
    <recommendedName>
        <fullName>Meiotic recombination protein rec8</fullName>
    </recommendedName>
    <alternativeName>
        <fullName>Cohesin rec8</fullName>
    </alternativeName>
</protein>
<gene>
    <name type="primary">rec8</name>
    <name type="ORF">SPBC29A10.14</name>
</gene>
<comment type="function">
    <text evidence="3 4">Involved primarily in the early steps of meiotic recombination. Required to ensure reductional chromosome segregation.</text>
</comment>
<comment type="subunit">
    <text evidence="5">Interacts with moa1.</text>
</comment>
<comment type="interaction">
    <interactant intactId="EBI-1564281">
        <id>P36626</id>
    </interactant>
    <interactant intactId="EBI-1564258">
        <id>Q9UTI4</id>
        <label>moa1</label>
    </interactant>
    <organismsDiffer>false</organismsDiffer>
    <experiments>2</experiments>
</comment>
<comment type="subcellular location">
    <subcellularLocation>
        <location evidence="2 6 7">Nucleus</location>
    </subcellularLocation>
    <subcellularLocation>
        <location evidence="7">Chromosome</location>
    </subcellularLocation>
    <text evidence="7">Localizes to meiotic chromosomal axis sites.</text>
</comment>
<comment type="developmental stage">
    <text>Abundant at 3 hours after induction of meiosis but undetectable before induction or at 4 hours and later.</text>
</comment>
<comment type="PTM">
    <text evidence="2 3">Phosphorylated during prophase until after meiosis I.</text>
</comment>
<comment type="similarity">
    <text evidence="8">Belongs to the rad21 family.</text>
</comment>
<sequence length="561" mass="64011">MFYNQDVLTKEKGGMGVIWLAATLGSKHSLRKLHKKDIMSVDIDEACDFVAFSPEPLALRLSSNLMIGVTRVWAHQYSFFHSQVSTLHLRVRKELDHFTSKPFKNIDIQNEQTNPKQLLLAEDPAFIPEVSLYDAFNLPSVDLHVDMSSFTQPKENPNISVLETLPDSTSYLINTSQNYSLRNNVSSFVYEDSRAFSTEEPLDFEFDENGDIQELTKGTINSDPSLQAASQHSNLGSVQREYNSEEQESRIHMFEIDEDVLPLPVPLQSVMDSEHNENEPRALKRRKVQKLLEPDENIELSTRTLSQWRKNYVERMIALEATKYVRRRGASSAKKKELNKFFDWESFHPLLKPWIEKLKPSNNTPSEIDDVLRNIDTSEVEVGRDVQGELGLNIPWNTSSRSNSAINSKSHSQTGSEHSTPLLDTKYRKRLPHSPSMPSRVEFLPALESSQFHETLNSELSLQLSDDFVLYKNTQEENAHLMLSMEKECANFYEYAKTAIYENNGRITFSSLLPNDLKRPVVAQAFSHLLSLATKSAFLVKQDKPYSEISVSLNLKSTDAI</sequence>
<keyword id="KW-0158">Chromosome</keyword>
<keyword id="KW-0469">Meiosis</keyword>
<keyword id="KW-0539">Nucleus</keyword>
<keyword id="KW-0597">Phosphoprotein</keyword>
<keyword id="KW-1185">Reference proteome</keyword>
<organism>
    <name type="scientific">Schizosaccharomyces pombe (strain 972 / ATCC 24843)</name>
    <name type="common">Fission yeast</name>
    <dbReference type="NCBI Taxonomy" id="284812"/>
    <lineage>
        <taxon>Eukaryota</taxon>
        <taxon>Fungi</taxon>
        <taxon>Dikarya</taxon>
        <taxon>Ascomycota</taxon>
        <taxon>Taphrinomycotina</taxon>
        <taxon>Schizosaccharomycetes</taxon>
        <taxon>Schizosaccharomycetales</taxon>
        <taxon>Schizosaccharomycetaceae</taxon>
        <taxon>Schizosaccharomyces</taxon>
    </lineage>
</organism>
<feature type="chain" id="PRO_0000097880" description="Meiotic recombination protein rec8">
    <location>
        <begin position="1"/>
        <end position="561"/>
    </location>
</feature>
<feature type="region of interest" description="Disordered" evidence="1">
    <location>
        <begin position="223"/>
        <end position="247"/>
    </location>
</feature>
<feature type="region of interest" description="Disordered" evidence="1">
    <location>
        <begin position="401"/>
        <end position="436"/>
    </location>
</feature>
<feature type="compositionally biased region" description="Polar residues" evidence="1">
    <location>
        <begin position="223"/>
        <end position="241"/>
    </location>
</feature>
<feature type="compositionally biased region" description="Low complexity" evidence="1">
    <location>
        <begin position="401"/>
        <end position="412"/>
    </location>
</feature>
<feature type="sequence conflict" description="In Ref. 4; AAB04034." evidence="8" ref="4">
    <original>SLATKSAFLVKQDKPYSEISVSLNLKSTDAI</original>
    <variation>CKYHNQTTN</variation>
    <location>
        <begin position="531"/>
        <end position="561"/>
    </location>
</feature>